<comment type="similarity">
    <text evidence="1">Belongs to the metallo-dependent hydrolases superfamily.</text>
</comment>
<organism>
    <name type="scientific">Bacillus subtilis (strain 168)</name>
    <dbReference type="NCBI Taxonomy" id="224308"/>
    <lineage>
        <taxon>Bacteria</taxon>
        <taxon>Bacillati</taxon>
        <taxon>Bacillota</taxon>
        <taxon>Bacilli</taxon>
        <taxon>Bacillales</taxon>
        <taxon>Bacillaceae</taxon>
        <taxon>Bacillus</taxon>
    </lineage>
</organism>
<evidence type="ECO:0000305" key="1"/>
<feature type="chain" id="PRO_0000359944" description="Putative amidohydrolase YtcJ">
    <location>
        <begin position="1"/>
        <end position="529"/>
    </location>
</feature>
<keyword id="KW-0378">Hydrolase</keyword>
<keyword id="KW-1185">Reference proteome</keyword>
<gene>
    <name type="primary">ytcJ</name>
    <name type="ordered locus">BSU29550</name>
</gene>
<reference key="1">
    <citation type="journal article" date="1997" name="Microbiology">
        <title>Sequencing and functional annotation of the Bacillus subtilis genes in the 200 kb rrnB-dnaB region.</title>
        <authorList>
            <person name="Lapidus A."/>
            <person name="Galleron N."/>
            <person name="Sorokin A."/>
            <person name="Ehrlich S.D."/>
        </authorList>
    </citation>
    <scope>NUCLEOTIDE SEQUENCE [GENOMIC DNA]</scope>
</reference>
<reference key="2">
    <citation type="journal article" date="1997" name="Nature">
        <title>The complete genome sequence of the Gram-positive bacterium Bacillus subtilis.</title>
        <authorList>
            <person name="Kunst F."/>
            <person name="Ogasawara N."/>
            <person name="Moszer I."/>
            <person name="Albertini A.M."/>
            <person name="Alloni G."/>
            <person name="Azevedo V."/>
            <person name="Bertero M.G."/>
            <person name="Bessieres P."/>
            <person name="Bolotin A."/>
            <person name="Borchert S."/>
            <person name="Borriss R."/>
            <person name="Boursier L."/>
            <person name="Brans A."/>
            <person name="Braun M."/>
            <person name="Brignell S.C."/>
            <person name="Bron S."/>
            <person name="Brouillet S."/>
            <person name="Bruschi C.V."/>
            <person name="Caldwell B."/>
            <person name="Capuano V."/>
            <person name="Carter N.M."/>
            <person name="Choi S.-K."/>
            <person name="Codani J.-J."/>
            <person name="Connerton I.F."/>
            <person name="Cummings N.J."/>
            <person name="Daniel R.A."/>
            <person name="Denizot F."/>
            <person name="Devine K.M."/>
            <person name="Duesterhoeft A."/>
            <person name="Ehrlich S.D."/>
            <person name="Emmerson P.T."/>
            <person name="Entian K.-D."/>
            <person name="Errington J."/>
            <person name="Fabret C."/>
            <person name="Ferrari E."/>
            <person name="Foulger D."/>
            <person name="Fritz C."/>
            <person name="Fujita M."/>
            <person name="Fujita Y."/>
            <person name="Fuma S."/>
            <person name="Galizzi A."/>
            <person name="Galleron N."/>
            <person name="Ghim S.-Y."/>
            <person name="Glaser P."/>
            <person name="Goffeau A."/>
            <person name="Golightly E.J."/>
            <person name="Grandi G."/>
            <person name="Guiseppi G."/>
            <person name="Guy B.J."/>
            <person name="Haga K."/>
            <person name="Haiech J."/>
            <person name="Harwood C.R."/>
            <person name="Henaut A."/>
            <person name="Hilbert H."/>
            <person name="Holsappel S."/>
            <person name="Hosono S."/>
            <person name="Hullo M.-F."/>
            <person name="Itaya M."/>
            <person name="Jones L.-M."/>
            <person name="Joris B."/>
            <person name="Karamata D."/>
            <person name="Kasahara Y."/>
            <person name="Klaerr-Blanchard M."/>
            <person name="Klein C."/>
            <person name="Kobayashi Y."/>
            <person name="Koetter P."/>
            <person name="Koningstein G."/>
            <person name="Krogh S."/>
            <person name="Kumano M."/>
            <person name="Kurita K."/>
            <person name="Lapidus A."/>
            <person name="Lardinois S."/>
            <person name="Lauber J."/>
            <person name="Lazarevic V."/>
            <person name="Lee S.-M."/>
            <person name="Levine A."/>
            <person name="Liu H."/>
            <person name="Masuda S."/>
            <person name="Mauel C."/>
            <person name="Medigue C."/>
            <person name="Medina N."/>
            <person name="Mellado R.P."/>
            <person name="Mizuno M."/>
            <person name="Moestl D."/>
            <person name="Nakai S."/>
            <person name="Noback M."/>
            <person name="Noone D."/>
            <person name="O'Reilly M."/>
            <person name="Ogawa K."/>
            <person name="Ogiwara A."/>
            <person name="Oudega B."/>
            <person name="Park S.-H."/>
            <person name="Parro V."/>
            <person name="Pohl T.M."/>
            <person name="Portetelle D."/>
            <person name="Porwollik S."/>
            <person name="Prescott A.M."/>
            <person name="Presecan E."/>
            <person name="Pujic P."/>
            <person name="Purnelle B."/>
            <person name="Rapoport G."/>
            <person name="Rey M."/>
            <person name="Reynolds S."/>
            <person name="Rieger M."/>
            <person name="Rivolta C."/>
            <person name="Rocha E."/>
            <person name="Roche B."/>
            <person name="Rose M."/>
            <person name="Sadaie Y."/>
            <person name="Sato T."/>
            <person name="Scanlan E."/>
            <person name="Schleich S."/>
            <person name="Schroeter R."/>
            <person name="Scoffone F."/>
            <person name="Sekiguchi J."/>
            <person name="Sekowska A."/>
            <person name="Seror S.J."/>
            <person name="Serror P."/>
            <person name="Shin B.-S."/>
            <person name="Soldo B."/>
            <person name="Sorokin A."/>
            <person name="Tacconi E."/>
            <person name="Takagi T."/>
            <person name="Takahashi H."/>
            <person name="Takemaru K."/>
            <person name="Takeuchi M."/>
            <person name="Tamakoshi A."/>
            <person name="Tanaka T."/>
            <person name="Terpstra P."/>
            <person name="Tognoni A."/>
            <person name="Tosato V."/>
            <person name="Uchiyama S."/>
            <person name="Vandenbol M."/>
            <person name="Vannier F."/>
            <person name="Vassarotti A."/>
            <person name="Viari A."/>
            <person name="Wambutt R."/>
            <person name="Wedler E."/>
            <person name="Wedler H."/>
            <person name="Weitzenegger T."/>
            <person name="Winters P."/>
            <person name="Wipat A."/>
            <person name="Yamamoto H."/>
            <person name="Yamane K."/>
            <person name="Yasumoto K."/>
            <person name="Yata K."/>
            <person name="Yoshida K."/>
            <person name="Yoshikawa H.-F."/>
            <person name="Zumstein E."/>
            <person name="Yoshikawa H."/>
            <person name="Danchin A."/>
        </authorList>
    </citation>
    <scope>NUCLEOTIDE SEQUENCE [LARGE SCALE GENOMIC DNA]</scope>
    <source>
        <strain>168</strain>
    </source>
</reference>
<sequence length="529" mass="58476">MKAIWHGGFIYTMLEEGDRTEAVYVEDGVIKGTGSYERLKEKYGSPETEEISLNGAVMFPGFVDSHLHLIGHGEKQLQLDLSALTSKDSILQAAKERERQLPKNDWLIGEGWNENQFETPDYLTKHDLDRLFPDRPVLLKRICRHAIAVNSAALQAAGISRNTPDPDGGVIVKDANGEPTGLLFDKAQDLILKAVPPVSQHYVDEALTAAIKDCWTKGLTGGHSEDLSYYGDVSVPMKAYEKAAAGGKYPFRCHLLVHHEAVDRWEQLEKLSGPYVEFGAMKIFADGALGGRTALLKEPYQDDPSTNGVQVHDDETLGRLIRKAREKGMEVAVHAIGDLAFEKVLNAIEKHPPKNGRHDRLIHAQVLDNELIERAARMPIALDLQPHFVASDFPWVIDRLGKDRMKTAFAWKTLISKGILCAGGSDAPIEPVDPLLGIQSAVLRKSSHEQNGPSYNESECLPVYEAIKLYTEGSAGIIYKEKSRGKIAEGYDADFTVLSGDPFAIDPAQLHLLEIKKTVINGQIVYEKS</sequence>
<proteinExistence type="inferred from homology"/>
<accession>O34355</accession>
<accession>Q795T9</accession>
<dbReference type="EC" id="3.5.-.-"/>
<dbReference type="EMBL" id="AF008220">
    <property type="protein sequence ID" value="AAC00311.1"/>
    <property type="molecule type" value="Genomic_DNA"/>
</dbReference>
<dbReference type="EMBL" id="AL009126">
    <property type="protein sequence ID" value="CAB14933.1"/>
    <property type="molecule type" value="Genomic_DNA"/>
</dbReference>
<dbReference type="PIR" id="F69989">
    <property type="entry name" value="F69989"/>
</dbReference>
<dbReference type="RefSeq" id="NP_390833.1">
    <property type="nucleotide sequence ID" value="NC_000964.3"/>
</dbReference>
<dbReference type="RefSeq" id="WP_003229333.1">
    <property type="nucleotide sequence ID" value="NZ_OZ025638.1"/>
</dbReference>
<dbReference type="SMR" id="O34355"/>
<dbReference type="FunCoup" id="O34355">
    <property type="interactions" value="336"/>
</dbReference>
<dbReference type="STRING" id="224308.BSU29550"/>
<dbReference type="PaxDb" id="224308-BSU29550"/>
<dbReference type="EnsemblBacteria" id="CAB14933">
    <property type="protein sequence ID" value="CAB14933"/>
    <property type="gene ID" value="BSU_29550"/>
</dbReference>
<dbReference type="GeneID" id="936723"/>
<dbReference type="KEGG" id="bsu:BSU29550"/>
<dbReference type="PATRIC" id="fig|224308.179.peg.3211"/>
<dbReference type="eggNOG" id="COG1574">
    <property type="taxonomic scope" value="Bacteria"/>
</dbReference>
<dbReference type="InParanoid" id="O34355"/>
<dbReference type="OrthoDB" id="9767366at2"/>
<dbReference type="PhylomeDB" id="O34355"/>
<dbReference type="BioCyc" id="BSUB:BSU29550-MONOMER"/>
<dbReference type="Proteomes" id="UP000001570">
    <property type="component" value="Chromosome"/>
</dbReference>
<dbReference type="GO" id="GO:0016810">
    <property type="term" value="F:hydrolase activity, acting on carbon-nitrogen (but not peptide) bonds"/>
    <property type="evidence" value="ECO:0007669"/>
    <property type="project" value="InterPro"/>
</dbReference>
<dbReference type="CDD" id="cd01300">
    <property type="entry name" value="YtcJ_like"/>
    <property type="match status" value="1"/>
</dbReference>
<dbReference type="Gene3D" id="3.10.310.70">
    <property type="match status" value="1"/>
</dbReference>
<dbReference type="Gene3D" id="3.20.20.140">
    <property type="entry name" value="Metal-dependent hydrolases"/>
    <property type="match status" value="1"/>
</dbReference>
<dbReference type="Gene3D" id="2.30.40.10">
    <property type="entry name" value="Urease, subunit C, domain 1"/>
    <property type="match status" value="1"/>
</dbReference>
<dbReference type="InterPro" id="IPR013108">
    <property type="entry name" value="Amidohydro_3"/>
</dbReference>
<dbReference type="InterPro" id="IPR011059">
    <property type="entry name" value="Metal-dep_hydrolase_composite"/>
</dbReference>
<dbReference type="InterPro" id="IPR032466">
    <property type="entry name" value="Metal_Hydrolase"/>
</dbReference>
<dbReference type="InterPro" id="IPR033932">
    <property type="entry name" value="YtcJ-like"/>
</dbReference>
<dbReference type="PANTHER" id="PTHR22642">
    <property type="entry name" value="IMIDAZOLONEPROPIONASE"/>
    <property type="match status" value="1"/>
</dbReference>
<dbReference type="PANTHER" id="PTHR22642:SF2">
    <property type="entry name" value="PROTEIN LONG AFTER FAR-RED 3"/>
    <property type="match status" value="1"/>
</dbReference>
<dbReference type="Pfam" id="PF07969">
    <property type="entry name" value="Amidohydro_3"/>
    <property type="match status" value="1"/>
</dbReference>
<dbReference type="SUPFAM" id="SSF51338">
    <property type="entry name" value="Composite domain of metallo-dependent hydrolases"/>
    <property type="match status" value="1"/>
</dbReference>
<dbReference type="SUPFAM" id="SSF51556">
    <property type="entry name" value="Metallo-dependent hydrolases"/>
    <property type="match status" value="1"/>
</dbReference>
<protein>
    <recommendedName>
        <fullName>Putative amidohydrolase YtcJ</fullName>
        <ecNumber>3.5.-.-</ecNumber>
    </recommendedName>
</protein>
<name>YTCJ_BACSU</name>